<protein>
    <recommendedName>
        <fullName evidence="1">Uracil phosphoribosyltransferase</fullName>
        <ecNumber evidence="1">2.4.2.9</ecNumber>
    </recommendedName>
    <alternativeName>
        <fullName evidence="1">UMP pyrophosphorylase</fullName>
    </alternativeName>
    <alternativeName>
        <fullName evidence="1">UPRTase</fullName>
    </alternativeName>
</protein>
<reference key="1">
    <citation type="journal article" date="2002" name="Nucleic Acids Res.">
        <title>The complete genomic sequence of Mycoplasma penetrans, an intracellular bacterial pathogen in humans.</title>
        <authorList>
            <person name="Sasaki Y."/>
            <person name="Ishikawa J."/>
            <person name="Yamashita A."/>
            <person name="Oshima K."/>
            <person name="Kenri T."/>
            <person name="Furuya K."/>
            <person name="Yoshino C."/>
            <person name="Horino A."/>
            <person name="Shiba T."/>
            <person name="Sasaki T."/>
            <person name="Hattori M."/>
        </authorList>
    </citation>
    <scope>NUCLEOTIDE SEQUENCE [LARGE SCALE GENOMIC DNA]</scope>
    <source>
        <strain>HF-2</strain>
    </source>
</reference>
<name>UPP_MALP2</name>
<evidence type="ECO:0000255" key="1">
    <source>
        <dbReference type="HAMAP-Rule" id="MF_01218"/>
    </source>
</evidence>
<accession>Q8EUA1</accession>
<comment type="function">
    <text evidence="1">Catalyzes the conversion of uracil and 5-phospho-alpha-D-ribose 1-diphosphate (PRPP) to UMP and diphosphate.</text>
</comment>
<comment type="catalytic activity">
    <reaction evidence="1">
        <text>UMP + diphosphate = 5-phospho-alpha-D-ribose 1-diphosphate + uracil</text>
        <dbReference type="Rhea" id="RHEA:13017"/>
        <dbReference type="ChEBI" id="CHEBI:17568"/>
        <dbReference type="ChEBI" id="CHEBI:33019"/>
        <dbReference type="ChEBI" id="CHEBI:57865"/>
        <dbReference type="ChEBI" id="CHEBI:58017"/>
        <dbReference type="EC" id="2.4.2.9"/>
    </reaction>
</comment>
<comment type="cofactor">
    <cofactor evidence="1">
        <name>Mg(2+)</name>
        <dbReference type="ChEBI" id="CHEBI:18420"/>
    </cofactor>
    <text evidence="1">Binds 1 Mg(2+) ion per subunit. The magnesium is bound as Mg-PRPP.</text>
</comment>
<comment type="activity regulation">
    <text evidence="1">Allosterically activated by GTP.</text>
</comment>
<comment type="pathway">
    <text evidence="1">Pyrimidine metabolism; UMP biosynthesis via salvage pathway; UMP from uracil: step 1/1.</text>
</comment>
<comment type="similarity">
    <text evidence="1">Belongs to the UPRTase family.</text>
</comment>
<feature type="chain" id="PRO_0000120855" description="Uracil phosphoribosyltransferase">
    <location>
        <begin position="1"/>
        <end position="206"/>
    </location>
</feature>
<feature type="binding site" evidence="1">
    <location>
        <position position="76"/>
    </location>
    <ligand>
        <name>5-phospho-alpha-D-ribose 1-diphosphate</name>
        <dbReference type="ChEBI" id="CHEBI:58017"/>
    </ligand>
</feature>
<feature type="binding site" evidence="1">
    <location>
        <position position="101"/>
    </location>
    <ligand>
        <name>5-phospho-alpha-D-ribose 1-diphosphate</name>
        <dbReference type="ChEBI" id="CHEBI:58017"/>
    </ligand>
</feature>
<feature type="binding site" evidence="1">
    <location>
        <begin position="128"/>
        <end position="136"/>
    </location>
    <ligand>
        <name>5-phospho-alpha-D-ribose 1-diphosphate</name>
        <dbReference type="ChEBI" id="CHEBI:58017"/>
    </ligand>
</feature>
<feature type="binding site" evidence="1">
    <location>
        <position position="191"/>
    </location>
    <ligand>
        <name>uracil</name>
        <dbReference type="ChEBI" id="CHEBI:17568"/>
    </ligand>
</feature>
<feature type="binding site" evidence="1">
    <location>
        <begin position="196"/>
        <end position="198"/>
    </location>
    <ligand>
        <name>uracil</name>
        <dbReference type="ChEBI" id="CHEBI:17568"/>
    </ligand>
</feature>
<feature type="binding site" evidence="1">
    <location>
        <position position="197"/>
    </location>
    <ligand>
        <name>5-phospho-alpha-D-ribose 1-diphosphate</name>
        <dbReference type="ChEBI" id="CHEBI:58017"/>
    </ligand>
</feature>
<organism>
    <name type="scientific">Malacoplasma penetrans (strain HF-2)</name>
    <name type="common">Mycoplasma penetrans</name>
    <dbReference type="NCBI Taxonomy" id="272633"/>
    <lineage>
        <taxon>Bacteria</taxon>
        <taxon>Bacillati</taxon>
        <taxon>Mycoplasmatota</taxon>
        <taxon>Mycoplasmoidales</taxon>
        <taxon>Mycoplasmoidaceae</taxon>
        <taxon>Malacoplasma</taxon>
    </lineage>
</organism>
<keyword id="KW-0021">Allosteric enzyme</keyword>
<keyword id="KW-0328">Glycosyltransferase</keyword>
<keyword id="KW-0342">GTP-binding</keyword>
<keyword id="KW-0460">Magnesium</keyword>
<keyword id="KW-0547">Nucleotide-binding</keyword>
<keyword id="KW-1185">Reference proteome</keyword>
<keyword id="KW-0808">Transferase</keyword>
<gene>
    <name evidence="1" type="primary">upp</name>
    <name type="ordered locus">MYPE10300</name>
</gene>
<proteinExistence type="inferred from homology"/>
<sequence>MTFVFDHPLIKDKLTRMRKIQTESTKFRDNLKEITQLMAYEVTKDLELDRIEIETPITKMLGYKLKEKIVLIPILRAGLGMVDGLKELIPTASIGHIGIYRDEETAQPKEYYCKMPANLTNGNAIILDPMLATGGSASKAIEIIKTYRPKTISFICLVAAPEGLKEIEKNHPDINIYVAALDEKLNEKYYIVPGLGDAGDRIFGTK</sequence>
<dbReference type="EC" id="2.4.2.9" evidence="1"/>
<dbReference type="EMBL" id="BA000026">
    <property type="protein sequence ID" value="BAC44815.1"/>
    <property type="molecule type" value="Genomic_DNA"/>
</dbReference>
<dbReference type="RefSeq" id="WP_011077843.1">
    <property type="nucleotide sequence ID" value="NC_004432.1"/>
</dbReference>
<dbReference type="SMR" id="Q8EUA1"/>
<dbReference type="FunCoup" id="Q8EUA1">
    <property type="interactions" value="227"/>
</dbReference>
<dbReference type="STRING" id="272633.gene:10732149"/>
<dbReference type="KEGG" id="mpe:MYPE10300"/>
<dbReference type="eggNOG" id="COG0035">
    <property type="taxonomic scope" value="Bacteria"/>
</dbReference>
<dbReference type="HOGENOM" id="CLU_067096_2_2_14"/>
<dbReference type="InParanoid" id="Q8EUA1"/>
<dbReference type="UniPathway" id="UPA00574">
    <property type="reaction ID" value="UER00636"/>
</dbReference>
<dbReference type="Proteomes" id="UP000002522">
    <property type="component" value="Chromosome"/>
</dbReference>
<dbReference type="GO" id="GO:0005525">
    <property type="term" value="F:GTP binding"/>
    <property type="evidence" value="ECO:0007669"/>
    <property type="project" value="UniProtKB-KW"/>
</dbReference>
<dbReference type="GO" id="GO:0000287">
    <property type="term" value="F:magnesium ion binding"/>
    <property type="evidence" value="ECO:0007669"/>
    <property type="project" value="UniProtKB-UniRule"/>
</dbReference>
<dbReference type="GO" id="GO:0004845">
    <property type="term" value="F:uracil phosphoribosyltransferase activity"/>
    <property type="evidence" value="ECO:0007669"/>
    <property type="project" value="UniProtKB-UniRule"/>
</dbReference>
<dbReference type="GO" id="GO:0044206">
    <property type="term" value="P:UMP salvage"/>
    <property type="evidence" value="ECO:0007669"/>
    <property type="project" value="UniProtKB-UniRule"/>
</dbReference>
<dbReference type="GO" id="GO:0006223">
    <property type="term" value="P:uracil salvage"/>
    <property type="evidence" value="ECO:0007669"/>
    <property type="project" value="InterPro"/>
</dbReference>
<dbReference type="CDD" id="cd06223">
    <property type="entry name" value="PRTases_typeI"/>
    <property type="match status" value="1"/>
</dbReference>
<dbReference type="FunFam" id="3.40.50.2020:FF:000003">
    <property type="entry name" value="Uracil phosphoribosyltransferase"/>
    <property type="match status" value="1"/>
</dbReference>
<dbReference type="Gene3D" id="3.40.50.2020">
    <property type="match status" value="1"/>
</dbReference>
<dbReference type="HAMAP" id="MF_01218_B">
    <property type="entry name" value="Upp_B"/>
    <property type="match status" value="1"/>
</dbReference>
<dbReference type="InterPro" id="IPR000836">
    <property type="entry name" value="PRibTrfase_dom"/>
</dbReference>
<dbReference type="InterPro" id="IPR029057">
    <property type="entry name" value="PRTase-like"/>
</dbReference>
<dbReference type="InterPro" id="IPR034332">
    <property type="entry name" value="Upp_B"/>
</dbReference>
<dbReference type="InterPro" id="IPR050054">
    <property type="entry name" value="UPRTase/APRTase"/>
</dbReference>
<dbReference type="InterPro" id="IPR005765">
    <property type="entry name" value="Ura_phspho_trans"/>
</dbReference>
<dbReference type="NCBIfam" id="NF001097">
    <property type="entry name" value="PRK00129.1"/>
    <property type="match status" value="1"/>
</dbReference>
<dbReference type="NCBIfam" id="TIGR01091">
    <property type="entry name" value="upp"/>
    <property type="match status" value="1"/>
</dbReference>
<dbReference type="PANTHER" id="PTHR32315">
    <property type="entry name" value="ADENINE PHOSPHORIBOSYLTRANSFERASE"/>
    <property type="match status" value="1"/>
</dbReference>
<dbReference type="PANTHER" id="PTHR32315:SF4">
    <property type="entry name" value="URACIL PHOSPHORIBOSYLTRANSFERASE, CHLOROPLASTIC"/>
    <property type="match status" value="1"/>
</dbReference>
<dbReference type="Pfam" id="PF14681">
    <property type="entry name" value="UPRTase"/>
    <property type="match status" value="1"/>
</dbReference>
<dbReference type="SUPFAM" id="SSF53271">
    <property type="entry name" value="PRTase-like"/>
    <property type="match status" value="1"/>
</dbReference>